<gene>
    <name evidence="1" type="primary">trpA</name>
    <name type="ordered locus">SMU_538</name>
</gene>
<organism>
    <name type="scientific">Streptococcus mutans serotype c (strain ATCC 700610 / UA159)</name>
    <dbReference type="NCBI Taxonomy" id="210007"/>
    <lineage>
        <taxon>Bacteria</taxon>
        <taxon>Bacillati</taxon>
        <taxon>Bacillota</taxon>
        <taxon>Bacilli</taxon>
        <taxon>Lactobacillales</taxon>
        <taxon>Streptococcaceae</taxon>
        <taxon>Streptococcus</taxon>
    </lineage>
</organism>
<name>TRPA_STRMU</name>
<keyword id="KW-0028">Amino-acid biosynthesis</keyword>
<keyword id="KW-0057">Aromatic amino acid biosynthesis</keyword>
<keyword id="KW-0456">Lyase</keyword>
<keyword id="KW-1185">Reference proteome</keyword>
<keyword id="KW-0822">Tryptophan biosynthesis</keyword>
<dbReference type="EC" id="4.2.1.20" evidence="1"/>
<dbReference type="EMBL" id="AE014133">
    <property type="protein sequence ID" value="AAN58281.1"/>
    <property type="molecule type" value="Genomic_DNA"/>
</dbReference>
<dbReference type="RefSeq" id="NP_720975.1">
    <property type="nucleotide sequence ID" value="NC_004350.2"/>
</dbReference>
<dbReference type="RefSeq" id="WP_002262057.1">
    <property type="nucleotide sequence ID" value="NC_004350.2"/>
</dbReference>
<dbReference type="SMR" id="Q8DVF2"/>
<dbReference type="STRING" id="210007.SMU_538"/>
<dbReference type="KEGG" id="smu:SMU_538"/>
<dbReference type="PATRIC" id="fig|210007.7.peg.475"/>
<dbReference type="eggNOG" id="COG0159">
    <property type="taxonomic scope" value="Bacteria"/>
</dbReference>
<dbReference type="HOGENOM" id="CLU_016734_0_0_9"/>
<dbReference type="OrthoDB" id="9804578at2"/>
<dbReference type="PhylomeDB" id="Q8DVF2"/>
<dbReference type="UniPathway" id="UPA00035">
    <property type="reaction ID" value="UER00044"/>
</dbReference>
<dbReference type="Proteomes" id="UP000002512">
    <property type="component" value="Chromosome"/>
</dbReference>
<dbReference type="GO" id="GO:0005829">
    <property type="term" value="C:cytosol"/>
    <property type="evidence" value="ECO:0007669"/>
    <property type="project" value="TreeGrafter"/>
</dbReference>
<dbReference type="GO" id="GO:0004834">
    <property type="term" value="F:tryptophan synthase activity"/>
    <property type="evidence" value="ECO:0007669"/>
    <property type="project" value="UniProtKB-UniRule"/>
</dbReference>
<dbReference type="CDD" id="cd04724">
    <property type="entry name" value="Tryptophan_synthase_alpha"/>
    <property type="match status" value="1"/>
</dbReference>
<dbReference type="Gene3D" id="3.20.20.70">
    <property type="entry name" value="Aldolase class I"/>
    <property type="match status" value="1"/>
</dbReference>
<dbReference type="HAMAP" id="MF_00131">
    <property type="entry name" value="Trp_synth_alpha"/>
    <property type="match status" value="1"/>
</dbReference>
<dbReference type="InterPro" id="IPR013785">
    <property type="entry name" value="Aldolase_TIM"/>
</dbReference>
<dbReference type="InterPro" id="IPR011060">
    <property type="entry name" value="RibuloseP-bd_barrel"/>
</dbReference>
<dbReference type="InterPro" id="IPR018204">
    <property type="entry name" value="Trp_synthase_alpha_AS"/>
</dbReference>
<dbReference type="InterPro" id="IPR002028">
    <property type="entry name" value="Trp_synthase_suA"/>
</dbReference>
<dbReference type="NCBIfam" id="TIGR00262">
    <property type="entry name" value="trpA"/>
    <property type="match status" value="1"/>
</dbReference>
<dbReference type="PANTHER" id="PTHR43406:SF1">
    <property type="entry name" value="TRYPTOPHAN SYNTHASE ALPHA CHAIN, CHLOROPLASTIC"/>
    <property type="match status" value="1"/>
</dbReference>
<dbReference type="PANTHER" id="PTHR43406">
    <property type="entry name" value="TRYPTOPHAN SYNTHASE, ALPHA CHAIN"/>
    <property type="match status" value="1"/>
</dbReference>
<dbReference type="Pfam" id="PF00290">
    <property type="entry name" value="Trp_syntA"/>
    <property type="match status" value="1"/>
</dbReference>
<dbReference type="SUPFAM" id="SSF51366">
    <property type="entry name" value="Ribulose-phoshate binding barrel"/>
    <property type="match status" value="1"/>
</dbReference>
<dbReference type="PROSITE" id="PS00167">
    <property type="entry name" value="TRP_SYNTHASE_ALPHA"/>
    <property type="match status" value="1"/>
</dbReference>
<proteinExistence type="inferred from homology"/>
<protein>
    <recommendedName>
        <fullName evidence="1">Tryptophan synthase alpha chain</fullName>
        <ecNumber evidence="1">4.2.1.20</ecNumber>
    </recommendedName>
</protein>
<sequence length="260" mass="28492">MTKTLTKHLQAIKAEGKGLFIPYIMAGDHDKGLDGLFDTISFLEAQGVSAIEIGIPWSDPVADGPVIELAGQRSLVKGTSLASIIARLQEKKTQVPLVIMTYFNPVFQYGVETFVADLQNTSVKGLIIPDLPHEQESFIKPYLENLDLALVPLVSLTTGLERQKELIEDARGFVYAVAINGVTGKTGNYRDDLDKHLKHLTEIAQIPVLTGFGVSTLADIKRFNQVSDGVIVGSKIVKGLHEGMQEEIKDFIYAGSHYQK</sequence>
<evidence type="ECO:0000255" key="1">
    <source>
        <dbReference type="HAMAP-Rule" id="MF_00131"/>
    </source>
</evidence>
<feature type="chain" id="PRO_0000098853" description="Tryptophan synthase alpha chain">
    <location>
        <begin position="1"/>
        <end position="260"/>
    </location>
</feature>
<feature type="active site" description="Proton acceptor" evidence="1">
    <location>
        <position position="52"/>
    </location>
</feature>
<feature type="active site" description="Proton acceptor" evidence="1">
    <location>
        <position position="63"/>
    </location>
</feature>
<comment type="function">
    <text evidence="1">The alpha subunit is responsible for the aldol cleavage of indoleglycerol phosphate to indole and glyceraldehyde 3-phosphate.</text>
</comment>
<comment type="catalytic activity">
    <reaction evidence="1">
        <text>(1S,2R)-1-C-(indol-3-yl)glycerol 3-phosphate + L-serine = D-glyceraldehyde 3-phosphate + L-tryptophan + H2O</text>
        <dbReference type="Rhea" id="RHEA:10532"/>
        <dbReference type="ChEBI" id="CHEBI:15377"/>
        <dbReference type="ChEBI" id="CHEBI:33384"/>
        <dbReference type="ChEBI" id="CHEBI:57912"/>
        <dbReference type="ChEBI" id="CHEBI:58866"/>
        <dbReference type="ChEBI" id="CHEBI:59776"/>
        <dbReference type="EC" id="4.2.1.20"/>
    </reaction>
</comment>
<comment type="pathway">
    <text evidence="1">Amino-acid biosynthesis; L-tryptophan biosynthesis; L-tryptophan from chorismate: step 5/5.</text>
</comment>
<comment type="subunit">
    <text evidence="1">Tetramer of two alpha and two beta chains.</text>
</comment>
<comment type="similarity">
    <text evidence="1">Belongs to the TrpA family.</text>
</comment>
<reference key="1">
    <citation type="journal article" date="2002" name="Proc. Natl. Acad. Sci. U.S.A.">
        <title>Genome sequence of Streptococcus mutans UA159, a cariogenic dental pathogen.</title>
        <authorList>
            <person name="Ajdic D.J."/>
            <person name="McShan W.M."/>
            <person name="McLaughlin R.E."/>
            <person name="Savic G."/>
            <person name="Chang J."/>
            <person name="Carson M.B."/>
            <person name="Primeaux C."/>
            <person name="Tian R."/>
            <person name="Kenton S."/>
            <person name="Jia H.G."/>
            <person name="Lin S.P."/>
            <person name="Qian Y."/>
            <person name="Li S."/>
            <person name="Zhu H."/>
            <person name="Najar F.Z."/>
            <person name="Lai H."/>
            <person name="White J."/>
            <person name="Roe B.A."/>
            <person name="Ferretti J.J."/>
        </authorList>
    </citation>
    <scope>NUCLEOTIDE SEQUENCE [LARGE SCALE GENOMIC DNA]</scope>
    <source>
        <strain>ATCC 700610 / UA159</strain>
    </source>
</reference>
<accession>Q8DVF2</accession>